<organism>
    <name type="scientific">Picrophilus torridus (strain ATCC 700027 / DSM 9790 / JCM 10055 / NBRC 100828 / KAW 2/3)</name>
    <dbReference type="NCBI Taxonomy" id="1122961"/>
    <lineage>
        <taxon>Archaea</taxon>
        <taxon>Methanobacteriati</taxon>
        <taxon>Thermoplasmatota</taxon>
        <taxon>Thermoplasmata</taxon>
        <taxon>Thermoplasmatales</taxon>
        <taxon>Picrophilaceae</taxon>
        <taxon>Picrophilus</taxon>
    </lineage>
</organism>
<sequence>MEFDLEFFRENNFVRKQCSVCSSYFWTLDDKRSTCGDPACNGYSFINKSPVYKKYNVDEMRDEFIKFFENDSLPHKFVEPYPVVPRWRDDVLLVNASIYDFQPQVTSGLAKPPGNPIVMSQPSIRMLDIDLVGKTGRHLTSFEMLCHDSFNYDDNYIYWKDETVRYSFRFLTERLRVDPLLITYKEKPWFGGGNAGNALEVFVMGLEVATLVFMDLKEDKNGDIELEGTRYSRMPLRVVDTGYGLERLVWLSTGTPTVYESIYKRSLDYIIKNSNAEYVSPEIMARISEIAAEIDPYSDELVLSRINKTGDKKFMEMLDNIRSAYGLVDHARTLLLMFSDYVIPSNVKVGYLARMLLRRSFRFMEKIKFNGSINDIFDAVYDEFNKIIKNYDKDFINNIIKIETEKYKEMLRSAPEIIRKHINKNTISNENIAKIYDTYGIPLEIISKVFKDLTNKELDIPENFQEYLVKLHENVKKPEKTVKDYPDINTRPLYYNDTGIMEFTGIVMYSNGNEIILNQTAFYPEGGGQPADHGYFLYNGKKIEVLDVQKYGNSIVHIINGSIPGHSRIKGFVDKERRTQLMIHHSATHLLLGICRAYFGEHVWQNSVKKDIDESRLDITHYKKITEDDIKNIENMCLDAIMASKNIHVKNIEWNRAISEYGFRLFEGGFPLSDTIRVVTIDDIDSEGCGGTHLKNTKDILMLKIVSTETVQEGIQRIVFTAGPAALRYSQKLYSIINDEQEYLKVPPEKIPEQSIKLVRENIENKKMINSLERELAEIYIKNALRIDDESFYIKSNEILSRVILKYTGARNGRFIINTGSRIYISSSYNDADVIASMLSNNYSGSKRVAICDCNANENLIKEILVKIKR</sequence>
<comment type="function">
    <text evidence="1">Catalyzes the attachment of alanine to tRNA(Ala) in a two-step reaction: alanine is first activated by ATP to form Ala-AMP and then transferred to the acceptor end of tRNA(Ala). Also edits incorrectly charged Ser-tRNA(Ala) and Gly-tRNA(Ala) via its editing domain.</text>
</comment>
<comment type="catalytic activity">
    <reaction evidence="1">
        <text>tRNA(Ala) + L-alanine + ATP = L-alanyl-tRNA(Ala) + AMP + diphosphate</text>
        <dbReference type="Rhea" id="RHEA:12540"/>
        <dbReference type="Rhea" id="RHEA-COMP:9657"/>
        <dbReference type="Rhea" id="RHEA-COMP:9923"/>
        <dbReference type="ChEBI" id="CHEBI:30616"/>
        <dbReference type="ChEBI" id="CHEBI:33019"/>
        <dbReference type="ChEBI" id="CHEBI:57972"/>
        <dbReference type="ChEBI" id="CHEBI:78442"/>
        <dbReference type="ChEBI" id="CHEBI:78497"/>
        <dbReference type="ChEBI" id="CHEBI:456215"/>
        <dbReference type="EC" id="6.1.1.7"/>
    </reaction>
</comment>
<comment type="cofactor">
    <cofactor evidence="1">
        <name>Zn(2+)</name>
        <dbReference type="ChEBI" id="CHEBI:29105"/>
    </cofactor>
    <text evidence="1">Binds 1 zinc ion per subunit.</text>
</comment>
<comment type="subcellular location">
    <subcellularLocation>
        <location evidence="1">Cytoplasm</location>
    </subcellularLocation>
</comment>
<comment type="domain">
    <text evidence="1">Consists of three domains; the N-terminal catalytic domain, the editing domain and the C-terminal C-Ala domain. The editing domain removes incorrectly charged amino acids, while the C-Ala domain, along with tRNA(Ala), serves as a bridge to cooperatively bring together the editing and aminoacylation centers thus stimulating deacylation of misacylated tRNAs.</text>
</comment>
<comment type="similarity">
    <text evidence="1">Belongs to the class-II aminoacyl-tRNA synthetase family.</text>
</comment>
<proteinExistence type="inferred from homology"/>
<evidence type="ECO:0000255" key="1">
    <source>
        <dbReference type="HAMAP-Rule" id="MF_00036"/>
    </source>
</evidence>
<protein>
    <recommendedName>
        <fullName evidence="1">Alanine--tRNA ligase</fullName>
        <ecNumber evidence="1">6.1.1.7</ecNumber>
    </recommendedName>
    <alternativeName>
        <fullName evidence="1">Alanyl-tRNA synthetase</fullName>
        <shortName evidence="1">AlaRS</shortName>
    </alternativeName>
</protein>
<accession>Q6L1Z4</accession>
<keyword id="KW-0030">Aminoacyl-tRNA synthetase</keyword>
<keyword id="KW-0067">ATP-binding</keyword>
<keyword id="KW-0963">Cytoplasm</keyword>
<keyword id="KW-0436">Ligase</keyword>
<keyword id="KW-0479">Metal-binding</keyword>
<keyword id="KW-0547">Nucleotide-binding</keyword>
<keyword id="KW-0648">Protein biosynthesis</keyword>
<keyword id="KW-0694">RNA-binding</keyword>
<keyword id="KW-0820">tRNA-binding</keyword>
<keyword id="KW-0862">Zinc</keyword>
<name>SYA_PICTO</name>
<dbReference type="EC" id="6.1.1.7" evidence="1"/>
<dbReference type="EMBL" id="AE017261">
    <property type="protein sequence ID" value="AAT43008.1"/>
    <property type="molecule type" value="Genomic_DNA"/>
</dbReference>
<dbReference type="RefSeq" id="WP_011177224.1">
    <property type="nucleotide sequence ID" value="NC_005877.1"/>
</dbReference>
<dbReference type="SMR" id="Q6L1Z4"/>
<dbReference type="FunCoup" id="Q6L1Z4">
    <property type="interactions" value="170"/>
</dbReference>
<dbReference type="STRING" id="263820.PTO0423"/>
<dbReference type="PaxDb" id="263820-PTO0423"/>
<dbReference type="GeneID" id="2845251"/>
<dbReference type="KEGG" id="pto:PTO0423"/>
<dbReference type="PATRIC" id="fig|263820.9.peg.448"/>
<dbReference type="eggNOG" id="arCOG01255">
    <property type="taxonomic scope" value="Archaea"/>
</dbReference>
<dbReference type="HOGENOM" id="CLU_004485_4_0_2"/>
<dbReference type="InParanoid" id="Q6L1Z4"/>
<dbReference type="OrthoDB" id="7506at2157"/>
<dbReference type="Proteomes" id="UP000000438">
    <property type="component" value="Chromosome"/>
</dbReference>
<dbReference type="GO" id="GO:0005737">
    <property type="term" value="C:cytoplasm"/>
    <property type="evidence" value="ECO:0007669"/>
    <property type="project" value="UniProtKB-SubCell"/>
</dbReference>
<dbReference type="GO" id="GO:0004813">
    <property type="term" value="F:alanine-tRNA ligase activity"/>
    <property type="evidence" value="ECO:0007669"/>
    <property type="project" value="UniProtKB-UniRule"/>
</dbReference>
<dbReference type="GO" id="GO:0002161">
    <property type="term" value="F:aminoacyl-tRNA deacylase activity"/>
    <property type="evidence" value="ECO:0007669"/>
    <property type="project" value="TreeGrafter"/>
</dbReference>
<dbReference type="GO" id="GO:0005524">
    <property type="term" value="F:ATP binding"/>
    <property type="evidence" value="ECO:0007669"/>
    <property type="project" value="UniProtKB-UniRule"/>
</dbReference>
<dbReference type="GO" id="GO:0000049">
    <property type="term" value="F:tRNA binding"/>
    <property type="evidence" value="ECO:0007669"/>
    <property type="project" value="UniProtKB-KW"/>
</dbReference>
<dbReference type="GO" id="GO:0008270">
    <property type="term" value="F:zinc ion binding"/>
    <property type="evidence" value="ECO:0007669"/>
    <property type="project" value="UniProtKB-UniRule"/>
</dbReference>
<dbReference type="GO" id="GO:0006419">
    <property type="term" value="P:alanyl-tRNA aminoacylation"/>
    <property type="evidence" value="ECO:0007669"/>
    <property type="project" value="UniProtKB-UniRule"/>
</dbReference>
<dbReference type="FunFam" id="3.30.980.10:FF:000004">
    <property type="entry name" value="Alanine--tRNA ligase, cytoplasmic"/>
    <property type="match status" value="1"/>
</dbReference>
<dbReference type="Gene3D" id="2.40.30.130">
    <property type="match status" value="1"/>
</dbReference>
<dbReference type="Gene3D" id="3.30.54.20">
    <property type="match status" value="1"/>
</dbReference>
<dbReference type="Gene3D" id="6.10.250.550">
    <property type="match status" value="1"/>
</dbReference>
<dbReference type="Gene3D" id="3.30.930.10">
    <property type="entry name" value="Bira Bifunctional Protein, Domain 2"/>
    <property type="match status" value="1"/>
</dbReference>
<dbReference type="Gene3D" id="3.30.980.10">
    <property type="entry name" value="Threonyl-trna Synthetase, Chain A, domain 2"/>
    <property type="match status" value="1"/>
</dbReference>
<dbReference type="HAMAP" id="MF_00036_A">
    <property type="entry name" value="Ala_tRNA_synth_A"/>
    <property type="match status" value="1"/>
</dbReference>
<dbReference type="InterPro" id="IPR045864">
    <property type="entry name" value="aa-tRNA-synth_II/BPL/LPL"/>
</dbReference>
<dbReference type="InterPro" id="IPR002318">
    <property type="entry name" value="Ala-tRNA-lgiase_IIc"/>
</dbReference>
<dbReference type="InterPro" id="IPR018162">
    <property type="entry name" value="Ala-tRNA-ligase_IIc_anticod-bd"/>
</dbReference>
<dbReference type="InterPro" id="IPR018165">
    <property type="entry name" value="Ala-tRNA-synth_IIc_core"/>
</dbReference>
<dbReference type="InterPro" id="IPR018164">
    <property type="entry name" value="Ala-tRNA-synth_IIc_N"/>
</dbReference>
<dbReference type="InterPro" id="IPR022429">
    <property type="entry name" value="Ala-tRNA_lgiase_arc"/>
</dbReference>
<dbReference type="InterPro" id="IPR050058">
    <property type="entry name" value="Ala-tRNA_ligase"/>
</dbReference>
<dbReference type="InterPro" id="IPR018163">
    <property type="entry name" value="Thr/Ala-tRNA-synth_IIc_edit"/>
</dbReference>
<dbReference type="InterPro" id="IPR009000">
    <property type="entry name" value="Transl_B-barrel_sf"/>
</dbReference>
<dbReference type="InterPro" id="IPR012947">
    <property type="entry name" value="tRNA_SAD"/>
</dbReference>
<dbReference type="NCBIfam" id="TIGR03683">
    <property type="entry name" value="A-tRNA_syn_arch"/>
    <property type="match status" value="1"/>
</dbReference>
<dbReference type="NCBIfam" id="TIGR00344">
    <property type="entry name" value="alaS"/>
    <property type="match status" value="1"/>
</dbReference>
<dbReference type="PANTHER" id="PTHR11777:SF9">
    <property type="entry name" value="ALANINE--TRNA LIGASE, CYTOPLASMIC"/>
    <property type="match status" value="1"/>
</dbReference>
<dbReference type="PANTHER" id="PTHR11777">
    <property type="entry name" value="ALANYL-TRNA SYNTHETASE"/>
    <property type="match status" value="1"/>
</dbReference>
<dbReference type="Pfam" id="PF01411">
    <property type="entry name" value="tRNA-synt_2c"/>
    <property type="match status" value="1"/>
</dbReference>
<dbReference type="Pfam" id="PF07973">
    <property type="entry name" value="tRNA_SAD"/>
    <property type="match status" value="1"/>
</dbReference>
<dbReference type="PRINTS" id="PR00980">
    <property type="entry name" value="TRNASYNTHALA"/>
</dbReference>
<dbReference type="SMART" id="SM00863">
    <property type="entry name" value="tRNA_SAD"/>
    <property type="match status" value="1"/>
</dbReference>
<dbReference type="SUPFAM" id="SSF55681">
    <property type="entry name" value="Class II aaRS and biotin synthetases"/>
    <property type="match status" value="1"/>
</dbReference>
<dbReference type="SUPFAM" id="SSF101353">
    <property type="entry name" value="Putative anticodon-binding domain of alanyl-tRNA synthetase (AlaRS)"/>
    <property type="match status" value="1"/>
</dbReference>
<dbReference type="SUPFAM" id="SSF55186">
    <property type="entry name" value="ThrRS/AlaRS common domain"/>
    <property type="match status" value="1"/>
</dbReference>
<dbReference type="SUPFAM" id="SSF50447">
    <property type="entry name" value="Translation proteins"/>
    <property type="match status" value="1"/>
</dbReference>
<dbReference type="PROSITE" id="PS50860">
    <property type="entry name" value="AA_TRNA_LIGASE_II_ALA"/>
    <property type="match status" value="1"/>
</dbReference>
<reference key="1">
    <citation type="journal article" date="2004" name="Proc. Natl. Acad. Sci. U.S.A.">
        <title>Genome sequence of Picrophilus torridus and its implications for life around pH 0.</title>
        <authorList>
            <person name="Fuetterer O."/>
            <person name="Angelov A."/>
            <person name="Liesegang H."/>
            <person name="Gottschalk G."/>
            <person name="Schleper C."/>
            <person name="Schepers B."/>
            <person name="Dock C."/>
            <person name="Antranikian G."/>
            <person name="Liebl W."/>
        </authorList>
    </citation>
    <scope>NUCLEOTIDE SEQUENCE [LARGE SCALE GENOMIC DNA]</scope>
    <source>
        <strain>ATCC 700027 / DSM 9790 / JCM 10055 / NBRC 100828 / KAW 2/3</strain>
    </source>
</reference>
<gene>
    <name evidence="1" type="primary">alaS</name>
    <name type="ordered locus">PTO0423</name>
</gene>
<feature type="chain" id="PRO_0000075270" description="Alanine--tRNA ligase">
    <location>
        <begin position="1"/>
        <end position="870"/>
    </location>
</feature>
<feature type="binding site" evidence="1">
    <location>
        <position position="585"/>
    </location>
    <ligand>
        <name>Zn(2+)</name>
        <dbReference type="ChEBI" id="CHEBI:29105"/>
    </ligand>
</feature>
<feature type="binding site" evidence="1">
    <location>
        <position position="589"/>
    </location>
    <ligand>
        <name>Zn(2+)</name>
        <dbReference type="ChEBI" id="CHEBI:29105"/>
    </ligand>
</feature>
<feature type="binding site" evidence="1">
    <location>
        <position position="689"/>
    </location>
    <ligand>
        <name>Zn(2+)</name>
        <dbReference type="ChEBI" id="CHEBI:29105"/>
    </ligand>
</feature>
<feature type="binding site" evidence="1">
    <location>
        <position position="693"/>
    </location>
    <ligand>
        <name>Zn(2+)</name>
        <dbReference type="ChEBI" id="CHEBI:29105"/>
    </ligand>
</feature>